<name>PAND_SALAI</name>
<keyword id="KW-0068">Autocatalytic cleavage</keyword>
<keyword id="KW-0963">Cytoplasm</keyword>
<keyword id="KW-0210">Decarboxylase</keyword>
<keyword id="KW-0456">Lyase</keyword>
<keyword id="KW-0566">Pantothenate biosynthesis</keyword>
<keyword id="KW-0670">Pyruvate</keyword>
<keyword id="KW-0704">Schiff base</keyword>
<keyword id="KW-0865">Zymogen</keyword>
<evidence type="ECO:0000255" key="1">
    <source>
        <dbReference type="HAMAP-Rule" id="MF_00446"/>
    </source>
</evidence>
<proteinExistence type="inferred from homology"/>
<dbReference type="EC" id="4.1.1.11" evidence="1"/>
<dbReference type="EMBL" id="CP000850">
    <property type="protein sequence ID" value="ABW00471.1"/>
    <property type="molecule type" value="Genomic_DNA"/>
</dbReference>
<dbReference type="SMR" id="A8M8F2"/>
<dbReference type="STRING" id="391037.Sare_4717"/>
<dbReference type="KEGG" id="saq:Sare_4717"/>
<dbReference type="PATRIC" id="fig|391037.6.peg.4768"/>
<dbReference type="eggNOG" id="COG0853">
    <property type="taxonomic scope" value="Bacteria"/>
</dbReference>
<dbReference type="HOGENOM" id="CLU_115305_2_0_11"/>
<dbReference type="OrthoDB" id="9803983at2"/>
<dbReference type="UniPathway" id="UPA00028">
    <property type="reaction ID" value="UER00002"/>
</dbReference>
<dbReference type="GO" id="GO:0005829">
    <property type="term" value="C:cytosol"/>
    <property type="evidence" value="ECO:0007669"/>
    <property type="project" value="TreeGrafter"/>
</dbReference>
<dbReference type="GO" id="GO:0004068">
    <property type="term" value="F:aspartate 1-decarboxylase activity"/>
    <property type="evidence" value="ECO:0007669"/>
    <property type="project" value="UniProtKB-UniRule"/>
</dbReference>
<dbReference type="GO" id="GO:0006523">
    <property type="term" value="P:alanine biosynthetic process"/>
    <property type="evidence" value="ECO:0007669"/>
    <property type="project" value="InterPro"/>
</dbReference>
<dbReference type="GO" id="GO:0015940">
    <property type="term" value="P:pantothenate biosynthetic process"/>
    <property type="evidence" value="ECO:0007669"/>
    <property type="project" value="UniProtKB-UniRule"/>
</dbReference>
<dbReference type="CDD" id="cd06919">
    <property type="entry name" value="Asp_decarbox"/>
    <property type="match status" value="1"/>
</dbReference>
<dbReference type="Gene3D" id="2.40.40.20">
    <property type="match status" value="1"/>
</dbReference>
<dbReference type="HAMAP" id="MF_00446">
    <property type="entry name" value="PanD"/>
    <property type="match status" value="1"/>
</dbReference>
<dbReference type="InterPro" id="IPR009010">
    <property type="entry name" value="Asp_de-COase-like_dom_sf"/>
</dbReference>
<dbReference type="InterPro" id="IPR003190">
    <property type="entry name" value="Asp_decarbox"/>
</dbReference>
<dbReference type="NCBIfam" id="TIGR00223">
    <property type="entry name" value="panD"/>
    <property type="match status" value="1"/>
</dbReference>
<dbReference type="PANTHER" id="PTHR21012">
    <property type="entry name" value="ASPARTATE 1-DECARBOXYLASE"/>
    <property type="match status" value="1"/>
</dbReference>
<dbReference type="PANTHER" id="PTHR21012:SF0">
    <property type="entry name" value="ASPARTATE 1-DECARBOXYLASE"/>
    <property type="match status" value="1"/>
</dbReference>
<dbReference type="Pfam" id="PF02261">
    <property type="entry name" value="Asp_decarbox"/>
    <property type="match status" value="1"/>
</dbReference>
<dbReference type="PIRSF" id="PIRSF006246">
    <property type="entry name" value="Asp_decarbox"/>
    <property type="match status" value="1"/>
</dbReference>
<dbReference type="SUPFAM" id="SSF50692">
    <property type="entry name" value="ADC-like"/>
    <property type="match status" value="1"/>
</dbReference>
<protein>
    <recommendedName>
        <fullName evidence="1">Aspartate 1-decarboxylase</fullName>
        <ecNumber evidence="1">4.1.1.11</ecNumber>
    </recommendedName>
    <alternativeName>
        <fullName evidence="1">Aspartate alpha-decarboxylase</fullName>
    </alternativeName>
    <component>
        <recommendedName>
            <fullName evidence="1">Aspartate 1-decarboxylase beta chain</fullName>
        </recommendedName>
    </component>
    <component>
        <recommendedName>
            <fullName evidence="1">Aspartate 1-decarboxylase alpha chain</fullName>
        </recommendedName>
    </component>
</protein>
<feature type="chain" id="PRO_1000080936" description="Aspartate 1-decarboxylase beta chain" evidence="1">
    <location>
        <begin position="1"/>
        <end position="24"/>
    </location>
</feature>
<feature type="chain" id="PRO_1000080937" description="Aspartate 1-decarboxylase alpha chain" evidence="1">
    <location>
        <begin position="25"/>
        <end position="141"/>
    </location>
</feature>
<feature type="active site" description="Schiff-base intermediate with substrate; via pyruvic acid" evidence="1">
    <location>
        <position position="25"/>
    </location>
</feature>
<feature type="active site" description="Proton donor" evidence="1">
    <location>
        <position position="58"/>
    </location>
</feature>
<feature type="binding site" evidence="1">
    <location>
        <position position="57"/>
    </location>
    <ligand>
        <name>substrate</name>
    </ligand>
</feature>
<feature type="binding site" evidence="1">
    <location>
        <begin position="73"/>
        <end position="75"/>
    </location>
    <ligand>
        <name>substrate</name>
    </ligand>
</feature>
<feature type="modified residue" description="Pyruvic acid (Ser)" evidence="1">
    <location>
        <position position="25"/>
    </location>
</feature>
<accession>A8M8F2</accession>
<sequence length="141" mass="14675">MLRTMLKSKIHRATVTQADLHYVGSVTVDQDLLDAADLLPGEQVAIVDINNGSRLETYVIPGKRGSGVIGINGAAAHLVHTGDLVILIAYGQMDDAEARAYQPRVVHVDSANQVIDLNADTSTAAAGTAGAPVPNPLADPA</sequence>
<comment type="function">
    <text evidence="1">Catalyzes the pyruvoyl-dependent decarboxylation of aspartate to produce beta-alanine.</text>
</comment>
<comment type="catalytic activity">
    <reaction evidence="1">
        <text>L-aspartate + H(+) = beta-alanine + CO2</text>
        <dbReference type="Rhea" id="RHEA:19497"/>
        <dbReference type="ChEBI" id="CHEBI:15378"/>
        <dbReference type="ChEBI" id="CHEBI:16526"/>
        <dbReference type="ChEBI" id="CHEBI:29991"/>
        <dbReference type="ChEBI" id="CHEBI:57966"/>
        <dbReference type="EC" id="4.1.1.11"/>
    </reaction>
</comment>
<comment type="cofactor">
    <cofactor evidence="1">
        <name>pyruvate</name>
        <dbReference type="ChEBI" id="CHEBI:15361"/>
    </cofactor>
    <text evidence="1">Binds 1 pyruvoyl group covalently per subunit.</text>
</comment>
<comment type="pathway">
    <text evidence="1">Cofactor biosynthesis; (R)-pantothenate biosynthesis; beta-alanine from L-aspartate: step 1/1.</text>
</comment>
<comment type="subunit">
    <text evidence="1">Heterooctamer of four alpha and four beta subunits.</text>
</comment>
<comment type="subcellular location">
    <subcellularLocation>
        <location evidence="1">Cytoplasm</location>
    </subcellularLocation>
</comment>
<comment type="PTM">
    <text evidence="1">Is synthesized initially as an inactive proenzyme, which is activated by self-cleavage at a specific serine bond to produce a beta-subunit with a hydroxyl group at its C-terminus and an alpha-subunit with a pyruvoyl group at its N-terminus.</text>
</comment>
<comment type="similarity">
    <text evidence="1">Belongs to the PanD family.</text>
</comment>
<reference key="1">
    <citation type="submission" date="2007-10" db="EMBL/GenBank/DDBJ databases">
        <title>Complete sequence of Salinispora arenicola CNS-205.</title>
        <authorList>
            <consortium name="US DOE Joint Genome Institute"/>
            <person name="Copeland A."/>
            <person name="Lucas S."/>
            <person name="Lapidus A."/>
            <person name="Barry K."/>
            <person name="Glavina del Rio T."/>
            <person name="Dalin E."/>
            <person name="Tice H."/>
            <person name="Pitluck S."/>
            <person name="Foster B."/>
            <person name="Schmutz J."/>
            <person name="Larimer F."/>
            <person name="Land M."/>
            <person name="Hauser L."/>
            <person name="Kyrpides N."/>
            <person name="Ivanova N."/>
            <person name="Jensen P.R."/>
            <person name="Moore B.S."/>
            <person name="Penn K."/>
            <person name="Jenkins C."/>
            <person name="Udwary D."/>
            <person name="Xiang L."/>
            <person name="Gontang E."/>
            <person name="Richardson P."/>
        </authorList>
    </citation>
    <scope>NUCLEOTIDE SEQUENCE [LARGE SCALE GENOMIC DNA]</scope>
    <source>
        <strain>CNS-205</strain>
    </source>
</reference>
<gene>
    <name evidence="1" type="primary">panD</name>
    <name type="ordered locus">Sare_4717</name>
</gene>
<organism>
    <name type="scientific">Salinispora arenicola (strain CNS-205)</name>
    <dbReference type="NCBI Taxonomy" id="391037"/>
    <lineage>
        <taxon>Bacteria</taxon>
        <taxon>Bacillati</taxon>
        <taxon>Actinomycetota</taxon>
        <taxon>Actinomycetes</taxon>
        <taxon>Micromonosporales</taxon>
        <taxon>Micromonosporaceae</taxon>
        <taxon>Salinispora</taxon>
    </lineage>
</organism>